<proteinExistence type="evidence at transcript level"/>
<gene>
    <name evidence="1" type="primary">pgap1</name>
</gene>
<protein>
    <recommendedName>
        <fullName evidence="1">GPI inositol-deacylase</fullName>
        <ecNumber evidence="1">3.1.-.-</ecNumber>
    </recommendedName>
    <alternativeName>
        <fullName>Post-GPI attachment to proteins factor 1</fullName>
    </alternativeName>
</protein>
<comment type="function">
    <text evidence="2">GPI inositol-deacylase that catalyzes the remove of the acyl chain linked to the 2-OH position of inositol ring from the GPI-anchored protein (GPI-AP) in the endoplasmic reticulum. Initiates the post-attachment remodeling phase of GPI-AP biogenesis and participates in endoplasmic reticulum (ER)-to-Golgi transport of GPI-anchored protein.</text>
</comment>
<comment type="subcellular location">
    <subcellularLocation>
        <location evidence="2">Endoplasmic reticulum membrane</location>
        <topology evidence="2">Multi-pass membrane protein</topology>
    </subcellularLocation>
</comment>
<comment type="similarity">
    <text evidence="4">Belongs to the GPI inositol-deacylase family.</text>
</comment>
<evidence type="ECO:0000250" key="1">
    <source>
        <dbReference type="UniProtKB" id="Q75T13"/>
    </source>
</evidence>
<evidence type="ECO:0000250" key="2">
    <source>
        <dbReference type="UniProtKB" id="Q765A7"/>
    </source>
</evidence>
<evidence type="ECO:0000255" key="3"/>
<evidence type="ECO:0000305" key="4"/>
<accession>Q66J01</accession>
<name>PGAP1_XENLA</name>
<organism>
    <name type="scientific">Xenopus laevis</name>
    <name type="common">African clawed frog</name>
    <dbReference type="NCBI Taxonomy" id="8355"/>
    <lineage>
        <taxon>Eukaryota</taxon>
        <taxon>Metazoa</taxon>
        <taxon>Chordata</taxon>
        <taxon>Craniata</taxon>
        <taxon>Vertebrata</taxon>
        <taxon>Euteleostomi</taxon>
        <taxon>Amphibia</taxon>
        <taxon>Batrachia</taxon>
        <taxon>Anura</taxon>
        <taxon>Pipoidea</taxon>
        <taxon>Pipidae</taxon>
        <taxon>Xenopodinae</taxon>
        <taxon>Xenopus</taxon>
        <taxon>Xenopus</taxon>
    </lineage>
</organism>
<dbReference type="EC" id="3.1.-.-" evidence="1"/>
<dbReference type="EMBL" id="BC081123">
    <property type="protein sequence ID" value="AAH81123.1"/>
    <property type="molecule type" value="mRNA"/>
</dbReference>
<dbReference type="RefSeq" id="NP_001087710.1">
    <property type="nucleotide sequence ID" value="NM_001094241.1"/>
</dbReference>
<dbReference type="SMR" id="Q66J01"/>
<dbReference type="ESTHER" id="xenla-q66j01">
    <property type="family name" value="PGAP1"/>
</dbReference>
<dbReference type="GlyCosmos" id="Q66J01">
    <property type="glycosylation" value="8 sites, No reported glycans"/>
</dbReference>
<dbReference type="DNASU" id="447534"/>
<dbReference type="GeneID" id="447534"/>
<dbReference type="KEGG" id="xla:447534"/>
<dbReference type="AGR" id="Xenbase:XB-GENE-5818693"/>
<dbReference type="CTD" id="447534"/>
<dbReference type="Xenbase" id="XB-GENE-5818693">
    <property type="gene designation" value="pgap1.L"/>
</dbReference>
<dbReference type="OrthoDB" id="348976at2759"/>
<dbReference type="Proteomes" id="UP000186698">
    <property type="component" value="Chromosome 9_10L"/>
</dbReference>
<dbReference type="Bgee" id="447534">
    <property type="expression patterns" value="Expressed in egg cell and 18 other cell types or tissues"/>
</dbReference>
<dbReference type="GO" id="GO:0005783">
    <property type="term" value="C:endoplasmic reticulum"/>
    <property type="evidence" value="ECO:0000250"/>
    <property type="project" value="UniProtKB"/>
</dbReference>
<dbReference type="GO" id="GO:0005789">
    <property type="term" value="C:endoplasmic reticulum membrane"/>
    <property type="evidence" value="ECO:0007669"/>
    <property type="project" value="UniProtKB-SubCell"/>
</dbReference>
<dbReference type="GO" id="GO:0160215">
    <property type="term" value="F:deacylase activity"/>
    <property type="evidence" value="ECO:0000250"/>
    <property type="project" value="UniProtKB"/>
</dbReference>
<dbReference type="GO" id="GO:0050185">
    <property type="term" value="F:phosphatidylinositol deacylase activity"/>
    <property type="evidence" value="ECO:0000318"/>
    <property type="project" value="GO_Central"/>
</dbReference>
<dbReference type="GO" id="GO:0006888">
    <property type="term" value="P:endoplasmic reticulum to Golgi vesicle-mediated transport"/>
    <property type="evidence" value="ECO:0007669"/>
    <property type="project" value="TreeGrafter"/>
</dbReference>
<dbReference type="GO" id="GO:0006506">
    <property type="term" value="P:GPI anchor biosynthetic process"/>
    <property type="evidence" value="ECO:0000318"/>
    <property type="project" value="GO_Central"/>
</dbReference>
<dbReference type="GO" id="GO:1902953">
    <property type="term" value="P:positive regulation of ER to Golgi vesicle-mediated transport"/>
    <property type="evidence" value="ECO:0000250"/>
    <property type="project" value="UniProtKB"/>
</dbReference>
<dbReference type="GO" id="GO:0015031">
    <property type="term" value="P:protein transport"/>
    <property type="evidence" value="ECO:0007669"/>
    <property type="project" value="UniProtKB-KW"/>
</dbReference>
<dbReference type="FunFam" id="3.40.50.1820:FF:000026">
    <property type="entry name" value="GPI inositol-deacylase"/>
    <property type="match status" value="1"/>
</dbReference>
<dbReference type="Gene3D" id="3.40.50.1820">
    <property type="entry name" value="alpha/beta hydrolase"/>
    <property type="match status" value="1"/>
</dbReference>
<dbReference type="InterPro" id="IPR029058">
    <property type="entry name" value="AB_hydrolase_fold"/>
</dbReference>
<dbReference type="InterPro" id="IPR012908">
    <property type="entry name" value="PGAP1-ab_dom-like"/>
</dbReference>
<dbReference type="InterPro" id="IPR039529">
    <property type="entry name" value="PGAP1/BST1"/>
</dbReference>
<dbReference type="InterPro" id="IPR056824">
    <property type="entry name" value="PGAP1_TMD"/>
</dbReference>
<dbReference type="PANTHER" id="PTHR15495:SF7">
    <property type="entry name" value="GPI INOSITOL-DEACYLASE"/>
    <property type="match status" value="1"/>
</dbReference>
<dbReference type="PANTHER" id="PTHR15495">
    <property type="entry name" value="NEGATIVE REGULATOR OF VESICLE FORMATION-RELATED"/>
    <property type="match status" value="1"/>
</dbReference>
<dbReference type="Pfam" id="PF07819">
    <property type="entry name" value="PGAP1"/>
    <property type="match status" value="1"/>
</dbReference>
<dbReference type="Pfam" id="PF25141">
    <property type="entry name" value="PGAP1_2nd"/>
    <property type="match status" value="1"/>
</dbReference>
<dbReference type="Pfam" id="PF24660">
    <property type="entry name" value="PGAP1_3rd"/>
    <property type="match status" value="1"/>
</dbReference>
<dbReference type="Pfam" id="PF25140">
    <property type="entry name" value="PGAP1_TMD"/>
    <property type="match status" value="1"/>
</dbReference>
<dbReference type="SUPFAM" id="SSF53474">
    <property type="entry name" value="alpha/beta-Hydrolases"/>
    <property type="match status" value="1"/>
</dbReference>
<dbReference type="PROSITE" id="PS00120">
    <property type="entry name" value="LIPASE_SER"/>
    <property type="match status" value="1"/>
</dbReference>
<sequence>MNPLSAVFNSVVLVLLALGVTDVFFSYESSRCSMTYMFEYPQYLQIKLSKKVSRLYPLYELYLYGEGSYAEENKNLTLTGVPVLFLPGNAGSYKQARSFASVALRKAENIGNRYHFNIFTVNFNEELVALYGGSLRRQTRFVHECIKTILSLYKNQTFPPESVAIIGHSMGGLVARALFTLKHFKPDLINVIITQATPHILPVLSTDIYLTDFYTMVNNYWIYNSLKLRNITMLSVAGGYSDYQVRSGLTFLPTSSFHTSALSVVSSAVPITWASTDHLSIVWCRELVLVTARALFDLIDEHTKQINIDPQSRMSVIKHHFVRHPAKHLESRHQITASFTETPKFTLVEDSKWTYTVNKESNESFFLFPLLDKRIAYSHFHCQNTFLYTHSWIFGCNKTVSPKCLQINDLSWETELLPSAKVVNLKLDVYSNLSHFILYIPATNGSKFSVECEFLSEEARTVHVPVTHVLSFGFSSSHAPLNSSGLLYVIQFEDFSKIYQAFNVFIVRNCGQNKESKSSIYKFHVPWSHEDLIGVLSDELPVRISAKLHAEQPQNDNRLVKLFLYASPECLHEVTISTSFSQILGQIVRFHGIYLPVYIVANLLLAYGAQLHSILIQGSCMDLDLSFDVAAKPYKVDPVLIICKYLLNYKWFKNYWDGLMLPQLDAVQLHAYGFWFPLASLFFFIFGTSIAYWSSIGLQAAVRILSSLWIYLKRPSMFPKESKCITYRVYAETLFFAFISWRSCGTFSLLLVFLRYLSKVLILYSSMKNYVSLNAHIVKDTSSKQDSVKTDSDTNINSNQLTHHQPSSLEIKALDDCLKMHFTILHLNLWIVLLGLPSFIYWLKTLRYTIQLDPDPNRVSALVLIFILEILMNSTTSAIKSSVCLKTAAVLQLPLSIIVVAFGTLHLYRISNLIAFSLFLHVVCCFV</sequence>
<feature type="chain" id="PRO_0000277626" description="GPI inositol-deacylase">
    <location>
        <begin position="1"/>
        <end position="927"/>
    </location>
</feature>
<feature type="topological domain" description="Cytoplasmic" evidence="2">
    <location>
        <begin position="1"/>
        <end position="4"/>
    </location>
</feature>
<feature type="transmembrane region" description="Helical" evidence="3">
    <location>
        <begin position="5"/>
        <end position="25"/>
    </location>
</feature>
<feature type="topological domain" description="Lumenal" evidence="2">
    <location>
        <begin position="26"/>
        <end position="595"/>
    </location>
</feature>
<feature type="transmembrane region" description="Helical" evidence="3">
    <location>
        <begin position="596"/>
        <end position="616"/>
    </location>
</feature>
<feature type="topological domain" description="Cytoplasmic" evidence="2">
    <location>
        <begin position="617"/>
        <end position="672"/>
    </location>
</feature>
<feature type="transmembrane region" description="Helical" evidence="3">
    <location>
        <begin position="673"/>
        <end position="693"/>
    </location>
</feature>
<feature type="topological domain" description="Lumenal" evidence="2">
    <location>
        <begin position="694"/>
        <end position="733"/>
    </location>
</feature>
<feature type="transmembrane region" description="Helical" evidence="3">
    <location>
        <begin position="734"/>
        <end position="754"/>
    </location>
</feature>
<feature type="topological domain" description="Cytoplasmic" evidence="2">
    <location>
        <begin position="755"/>
        <end position="821"/>
    </location>
</feature>
<feature type="transmembrane region" description="Helical" evidence="3">
    <location>
        <begin position="822"/>
        <end position="842"/>
    </location>
</feature>
<feature type="topological domain" description="Lumenal" evidence="2">
    <location>
        <begin position="843"/>
        <end position="858"/>
    </location>
</feature>
<feature type="transmembrane region" description="Helical" evidence="2">
    <location>
        <begin position="859"/>
        <end position="879"/>
    </location>
</feature>
<feature type="topological domain" description="Cytoplasmic" evidence="3">
    <location>
        <begin position="880"/>
        <end position="887"/>
    </location>
</feature>
<feature type="transmembrane region" description="Helical" evidence="3">
    <location>
        <begin position="888"/>
        <end position="908"/>
    </location>
</feature>
<feature type="topological domain" description="Lumenal" evidence="2">
    <location>
        <begin position="909"/>
        <end position="927"/>
    </location>
</feature>
<feature type="active site" evidence="2">
    <location>
        <position position="169"/>
    </location>
</feature>
<feature type="glycosylation site" description="N-linked (GlcNAc...) asparagine" evidence="3">
    <location>
        <position position="75"/>
    </location>
</feature>
<feature type="glycosylation site" description="N-linked (GlcNAc...) asparagine" evidence="3">
    <location>
        <position position="155"/>
    </location>
</feature>
<feature type="glycosylation site" description="N-linked (GlcNAc...) asparagine" evidence="3">
    <location>
        <position position="230"/>
    </location>
</feature>
<feature type="glycosylation site" description="N-linked (GlcNAc...) asparagine" evidence="3">
    <location>
        <position position="362"/>
    </location>
</feature>
<feature type="glycosylation site" description="N-linked (GlcNAc...) asparagine" evidence="3">
    <location>
        <position position="397"/>
    </location>
</feature>
<feature type="glycosylation site" description="N-linked (GlcNAc...) asparagine" evidence="3">
    <location>
        <position position="432"/>
    </location>
</feature>
<feature type="glycosylation site" description="N-linked (GlcNAc...) asparagine" evidence="3">
    <location>
        <position position="444"/>
    </location>
</feature>
<feature type="glycosylation site" description="N-linked (GlcNAc...) asparagine" evidence="3">
    <location>
        <position position="482"/>
    </location>
</feature>
<keyword id="KW-0256">Endoplasmic reticulum</keyword>
<keyword id="KW-0325">Glycoprotein</keyword>
<keyword id="KW-0378">Hydrolase</keyword>
<keyword id="KW-0472">Membrane</keyword>
<keyword id="KW-0653">Protein transport</keyword>
<keyword id="KW-1185">Reference proteome</keyword>
<keyword id="KW-0812">Transmembrane</keyword>
<keyword id="KW-1133">Transmembrane helix</keyword>
<keyword id="KW-0813">Transport</keyword>
<reference key="1">
    <citation type="submission" date="2004-08" db="EMBL/GenBank/DDBJ databases">
        <authorList>
            <consortium name="NIH - Xenopus Gene Collection (XGC) project"/>
        </authorList>
    </citation>
    <scope>NUCLEOTIDE SEQUENCE [LARGE SCALE MRNA]</scope>
    <source>
        <tissue>Oocyte</tissue>
    </source>
</reference>